<evidence type="ECO:0000269" key="1">
    <source>
    </source>
</evidence>
<evidence type="ECO:0000305" key="2"/>
<reference key="1">
    <citation type="journal article" date="1998" name="Nature">
        <title>Deciphering the biology of Mycobacterium tuberculosis from the complete genome sequence.</title>
        <authorList>
            <person name="Cole S.T."/>
            <person name="Brosch R."/>
            <person name="Parkhill J."/>
            <person name="Garnier T."/>
            <person name="Churcher C.M."/>
            <person name="Harris D.E."/>
            <person name="Gordon S.V."/>
            <person name="Eiglmeier K."/>
            <person name="Gas S."/>
            <person name="Barry C.E. III"/>
            <person name="Tekaia F."/>
            <person name="Badcock K."/>
            <person name="Basham D."/>
            <person name="Brown D."/>
            <person name="Chillingworth T."/>
            <person name="Connor R."/>
            <person name="Davies R.M."/>
            <person name="Devlin K."/>
            <person name="Feltwell T."/>
            <person name="Gentles S."/>
            <person name="Hamlin N."/>
            <person name="Holroyd S."/>
            <person name="Hornsby T."/>
            <person name="Jagels K."/>
            <person name="Krogh A."/>
            <person name="McLean J."/>
            <person name="Moule S."/>
            <person name="Murphy L.D."/>
            <person name="Oliver S."/>
            <person name="Osborne J."/>
            <person name="Quail M.A."/>
            <person name="Rajandream M.A."/>
            <person name="Rogers J."/>
            <person name="Rutter S."/>
            <person name="Seeger K."/>
            <person name="Skelton S."/>
            <person name="Squares S."/>
            <person name="Squares R."/>
            <person name="Sulston J.E."/>
            <person name="Taylor K."/>
            <person name="Whitehead S."/>
            <person name="Barrell B.G."/>
        </authorList>
    </citation>
    <scope>NUCLEOTIDE SEQUENCE [LARGE SCALE GENOMIC DNA]</scope>
    <source>
        <strain>ATCC 25618 / H37Rv</strain>
    </source>
</reference>
<reference key="2">
    <citation type="journal article" date="2000" name="Vaccine">
        <title>Isolation, purification and immunological characterization of novel low molecular weight protein antigen CFP 6 from culture filtrate of M. tuberculosis.</title>
        <authorList>
            <person name="Bhaskar S."/>
            <person name="Khanna S.P."/>
            <person name="Mukherjee R."/>
        </authorList>
    </citation>
    <scope>PROTEIN SEQUENCE OF 5-16</scope>
    <scope>SUBCELLULAR LOCATION</scope>
    <source>
        <strain>ATCC 25618 / H37Rv</strain>
    </source>
</reference>
<sequence>MAHFAVGFLTLGLLVPVLTWPVSAPLLVIPVALSASIIRLRTLADERGVTVRTLVGSRAVRWDDIDGLRFHRGSWARATLKDGTELRLPAVTFATLPHLTEASSGRVPNPYR</sequence>
<protein>
    <recommendedName>
        <fullName>Low molecular weight protein antigen 6</fullName>
    </recommendedName>
    <alternativeName>
        <fullName>CFP-6</fullName>
    </alternativeName>
</protein>
<organism>
    <name type="scientific">Mycobacterium tuberculosis (strain ATCC 25618 / H37Rv)</name>
    <dbReference type="NCBI Taxonomy" id="83332"/>
    <lineage>
        <taxon>Bacteria</taxon>
        <taxon>Bacillati</taxon>
        <taxon>Actinomycetota</taxon>
        <taxon>Actinomycetes</taxon>
        <taxon>Mycobacteriales</taxon>
        <taxon>Mycobacteriaceae</taxon>
        <taxon>Mycobacterium</taxon>
        <taxon>Mycobacterium tuberculosis complex</taxon>
    </lineage>
</organism>
<feature type="chain" id="PRO_0000089575" description="Low molecular weight protein antigen 6">
    <location>
        <begin position="1"/>
        <end position="112"/>
    </location>
</feature>
<feature type="sequence conflict" description="In Ref. 2; AA sequence." evidence="2" ref="2">
    <original>L</original>
    <variation>F</variation>
    <location>
        <position position="9"/>
    </location>
</feature>
<gene>
    <name type="primary">cfp6</name>
    <name type="ordered locus">Rv3004</name>
    <name type="ORF">MTV012.18</name>
</gene>
<name>CFP6_MYCTU</name>
<accession>P9WIR1</accession>
<accession>L0TBA1</accession>
<accession>O53251</accession>
<accession>P0A5P2</accession>
<dbReference type="EMBL" id="AL123456">
    <property type="protein sequence ID" value="CCP45810.1"/>
    <property type="molecule type" value="Genomic_DNA"/>
</dbReference>
<dbReference type="PIR" id="G70855">
    <property type="entry name" value="G70855"/>
</dbReference>
<dbReference type="RefSeq" id="NP_217520.1">
    <property type="nucleotide sequence ID" value="NC_000962.3"/>
</dbReference>
<dbReference type="RefSeq" id="WP_003415170.1">
    <property type="nucleotide sequence ID" value="NC_000962.3"/>
</dbReference>
<dbReference type="STRING" id="83332.Rv3004"/>
<dbReference type="PaxDb" id="83332-Rv3004"/>
<dbReference type="DNASU" id="887891"/>
<dbReference type="GeneID" id="887891"/>
<dbReference type="KEGG" id="mtu:Rv3004"/>
<dbReference type="KEGG" id="mtv:RVBD_3004"/>
<dbReference type="PATRIC" id="fig|83332.111.peg.3348"/>
<dbReference type="TubercuList" id="Rv3004"/>
<dbReference type="eggNOG" id="ENOG5033EBJ">
    <property type="taxonomic scope" value="Bacteria"/>
</dbReference>
<dbReference type="InParanoid" id="P9WIR1"/>
<dbReference type="OrthoDB" id="5190396at2"/>
<dbReference type="Proteomes" id="UP000001584">
    <property type="component" value="Chromosome"/>
</dbReference>
<dbReference type="GO" id="GO:0005576">
    <property type="term" value="C:extracellular region"/>
    <property type="evidence" value="ECO:0007005"/>
    <property type="project" value="MTBBASE"/>
</dbReference>
<dbReference type="InterPro" id="IPR019692">
    <property type="entry name" value="CFP-6_PH"/>
</dbReference>
<dbReference type="Pfam" id="PF10756">
    <property type="entry name" value="bPH_6"/>
    <property type="match status" value="1"/>
</dbReference>
<proteinExistence type="evidence at protein level"/>
<keyword id="KW-0903">Direct protein sequencing</keyword>
<keyword id="KW-1185">Reference proteome</keyword>
<keyword id="KW-0964">Secreted</keyword>
<comment type="subcellular location">
    <subcellularLocation>
        <location evidence="1">Secreted</location>
    </subcellularLocation>
</comment>
<comment type="caution">
    <text evidence="2">The initiator methionine may be further upstream making the sequence a precursor.</text>
</comment>